<gene>
    <name type="primary">HUB1</name>
    <name type="ordered locus">KLLA0C08470g</name>
</gene>
<feature type="chain" id="PRO_0000114877" description="Ubiquitin-like modifier HUB1">
    <location>
        <begin position="1"/>
        <end position="74"/>
    </location>
</feature>
<feature type="domain" description="Ubiquitin-like" evidence="1">
    <location>
        <begin position="1"/>
        <end position="74"/>
    </location>
</feature>
<dbReference type="EMBL" id="CR382123">
    <property type="protein sequence ID" value="CAH01428.1"/>
    <property type="molecule type" value="Genomic_DNA"/>
</dbReference>
<dbReference type="RefSeq" id="XP_452578.1">
    <property type="nucleotide sequence ID" value="XM_452578.1"/>
</dbReference>
<dbReference type="SMR" id="Q6CU12"/>
<dbReference type="FunCoup" id="Q6CU12">
    <property type="interactions" value="371"/>
</dbReference>
<dbReference type="STRING" id="284590.Q6CU12"/>
<dbReference type="PaxDb" id="284590-Q6CU12"/>
<dbReference type="KEGG" id="kla:KLLA0_C08470g"/>
<dbReference type="eggNOG" id="KOG3493">
    <property type="taxonomic scope" value="Eukaryota"/>
</dbReference>
<dbReference type="HOGENOM" id="CLU_156193_2_0_1"/>
<dbReference type="InParanoid" id="Q6CU12"/>
<dbReference type="Proteomes" id="UP000000598">
    <property type="component" value="Chromosome C"/>
</dbReference>
<dbReference type="GO" id="GO:0036211">
    <property type="term" value="P:protein modification process"/>
    <property type="evidence" value="ECO:0007669"/>
    <property type="project" value="InterPro"/>
</dbReference>
<dbReference type="CDD" id="cd01791">
    <property type="entry name" value="Ubl_UBL5"/>
    <property type="match status" value="1"/>
</dbReference>
<dbReference type="FunFam" id="3.10.20.90:FF:000052">
    <property type="entry name" value="Ubiquitin-like protein 5"/>
    <property type="match status" value="1"/>
</dbReference>
<dbReference type="Gene3D" id="3.10.20.90">
    <property type="entry name" value="Phosphatidylinositol 3-kinase Catalytic Subunit, Chain A, domain 1"/>
    <property type="match status" value="1"/>
</dbReference>
<dbReference type="InterPro" id="IPR039732">
    <property type="entry name" value="Hub1/Ubl5"/>
</dbReference>
<dbReference type="InterPro" id="IPR000626">
    <property type="entry name" value="Ubiquitin-like_dom"/>
</dbReference>
<dbReference type="InterPro" id="IPR029071">
    <property type="entry name" value="Ubiquitin-like_domsf"/>
</dbReference>
<dbReference type="PANTHER" id="PTHR13042">
    <property type="entry name" value="UBIQUITIN-LIKE PROTEIN 5"/>
    <property type="match status" value="1"/>
</dbReference>
<dbReference type="Pfam" id="PF00240">
    <property type="entry name" value="ubiquitin"/>
    <property type="match status" value="1"/>
</dbReference>
<dbReference type="SUPFAM" id="SSF54236">
    <property type="entry name" value="Ubiquitin-like"/>
    <property type="match status" value="1"/>
</dbReference>
<dbReference type="PROSITE" id="PS50053">
    <property type="entry name" value="UBIQUITIN_2"/>
    <property type="match status" value="1"/>
</dbReference>
<keyword id="KW-1185">Reference proteome</keyword>
<keyword id="KW-0833">Ubl conjugation pathway</keyword>
<organism>
    <name type="scientific">Kluyveromyces lactis (strain ATCC 8585 / CBS 2359 / DSM 70799 / NBRC 1267 / NRRL Y-1140 / WM37)</name>
    <name type="common">Yeast</name>
    <name type="synonym">Candida sphaerica</name>
    <dbReference type="NCBI Taxonomy" id="284590"/>
    <lineage>
        <taxon>Eukaryota</taxon>
        <taxon>Fungi</taxon>
        <taxon>Dikarya</taxon>
        <taxon>Ascomycota</taxon>
        <taxon>Saccharomycotina</taxon>
        <taxon>Saccharomycetes</taxon>
        <taxon>Saccharomycetales</taxon>
        <taxon>Saccharomycetaceae</taxon>
        <taxon>Kluyveromyces</taxon>
    </lineage>
</organism>
<sequence length="74" mass="8165">MIEVLVNDRLGKKVNVKCLSEDTVGDFKKVLSVQLGTASASKIVLQKGGSVLKDHITLEDYEVHDGTNLELYYV</sequence>
<name>HUB1_KLULA</name>
<accession>Q6CU12</accession>
<reference key="1">
    <citation type="journal article" date="2004" name="Nature">
        <title>Genome evolution in yeasts.</title>
        <authorList>
            <person name="Dujon B."/>
            <person name="Sherman D."/>
            <person name="Fischer G."/>
            <person name="Durrens P."/>
            <person name="Casaregola S."/>
            <person name="Lafontaine I."/>
            <person name="de Montigny J."/>
            <person name="Marck C."/>
            <person name="Neuveglise C."/>
            <person name="Talla E."/>
            <person name="Goffard N."/>
            <person name="Frangeul L."/>
            <person name="Aigle M."/>
            <person name="Anthouard V."/>
            <person name="Babour A."/>
            <person name="Barbe V."/>
            <person name="Barnay S."/>
            <person name="Blanchin S."/>
            <person name="Beckerich J.-M."/>
            <person name="Beyne E."/>
            <person name="Bleykasten C."/>
            <person name="Boisrame A."/>
            <person name="Boyer J."/>
            <person name="Cattolico L."/>
            <person name="Confanioleri F."/>
            <person name="de Daruvar A."/>
            <person name="Despons L."/>
            <person name="Fabre E."/>
            <person name="Fairhead C."/>
            <person name="Ferry-Dumazet H."/>
            <person name="Groppi A."/>
            <person name="Hantraye F."/>
            <person name="Hennequin C."/>
            <person name="Jauniaux N."/>
            <person name="Joyet P."/>
            <person name="Kachouri R."/>
            <person name="Kerrest A."/>
            <person name="Koszul R."/>
            <person name="Lemaire M."/>
            <person name="Lesur I."/>
            <person name="Ma L."/>
            <person name="Muller H."/>
            <person name="Nicaud J.-M."/>
            <person name="Nikolski M."/>
            <person name="Oztas S."/>
            <person name="Ozier-Kalogeropoulos O."/>
            <person name="Pellenz S."/>
            <person name="Potier S."/>
            <person name="Richard G.-F."/>
            <person name="Straub M.-L."/>
            <person name="Suleau A."/>
            <person name="Swennen D."/>
            <person name="Tekaia F."/>
            <person name="Wesolowski-Louvel M."/>
            <person name="Westhof E."/>
            <person name="Wirth B."/>
            <person name="Zeniou-Meyer M."/>
            <person name="Zivanovic Y."/>
            <person name="Bolotin-Fukuhara M."/>
            <person name="Thierry A."/>
            <person name="Bouchier C."/>
            <person name="Caudron B."/>
            <person name="Scarpelli C."/>
            <person name="Gaillardin C."/>
            <person name="Weissenbach J."/>
            <person name="Wincker P."/>
            <person name="Souciet J.-L."/>
        </authorList>
    </citation>
    <scope>NUCLEOTIDE SEQUENCE [LARGE SCALE GENOMIC DNA]</scope>
    <source>
        <strain>ATCC 8585 / CBS 2359 / DSM 70799 / NBRC 1267 / NRRL Y-1140 / WM37</strain>
    </source>
</reference>
<proteinExistence type="predicted"/>
<protein>
    <recommendedName>
        <fullName>Ubiquitin-like modifier HUB1</fullName>
    </recommendedName>
</protein>
<evidence type="ECO:0000255" key="1">
    <source>
        <dbReference type="PROSITE-ProRule" id="PRU00214"/>
    </source>
</evidence>